<geneLocation type="mitochondrion"/>
<protein>
    <recommendedName>
        <fullName>Cytochrome c oxidase subunit 3</fullName>
        <ecNumber>7.1.1.9</ecNumber>
    </recommendedName>
    <alternativeName>
        <fullName>Cytochrome c oxidase polypeptide III</fullName>
    </alternativeName>
</protein>
<feature type="chain" id="PRO_0000183804" description="Cytochrome c oxidase subunit 3">
    <location>
        <begin position="1"/>
        <end position="261"/>
    </location>
</feature>
<feature type="topological domain" description="Mitochondrial matrix" evidence="1">
    <location>
        <begin position="1"/>
        <end position="15"/>
    </location>
</feature>
<feature type="transmembrane region" description="Helical; Name=I" evidence="1">
    <location>
        <begin position="16"/>
        <end position="34"/>
    </location>
</feature>
<feature type="topological domain" description="Mitochondrial intermembrane" evidence="1">
    <location>
        <begin position="35"/>
        <end position="40"/>
    </location>
</feature>
<feature type="transmembrane region" description="Helical; Name=II" evidence="1">
    <location>
        <begin position="41"/>
        <end position="66"/>
    </location>
</feature>
<feature type="topological domain" description="Mitochondrial matrix" evidence="1">
    <location>
        <begin position="67"/>
        <end position="72"/>
    </location>
</feature>
<feature type="transmembrane region" description="Helical; Name=III" evidence="1">
    <location>
        <begin position="73"/>
        <end position="105"/>
    </location>
</feature>
<feature type="topological domain" description="Mitochondrial intermembrane" evidence="1">
    <location>
        <begin position="106"/>
        <end position="128"/>
    </location>
</feature>
<feature type="transmembrane region" description="Helical; Name=IV" evidence="1">
    <location>
        <begin position="129"/>
        <end position="152"/>
    </location>
</feature>
<feature type="topological domain" description="Mitochondrial matrix" evidence="1">
    <location>
        <begin position="153"/>
        <end position="155"/>
    </location>
</feature>
<feature type="transmembrane region" description="Helical; Name=V" evidence="1">
    <location>
        <begin position="156"/>
        <end position="183"/>
    </location>
</feature>
<feature type="topological domain" description="Mitochondrial intermembrane" evidence="1">
    <location>
        <begin position="184"/>
        <end position="190"/>
    </location>
</feature>
<feature type="transmembrane region" description="Helical; Name=VI" evidence="1">
    <location>
        <begin position="191"/>
        <end position="223"/>
    </location>
</feature>
<feature type="topological domain" description="Mitochondrial matrix" evidence="1">
    <location>
        <begin position="224"/>
        <end position="232"/>
    </location>
</feature>
<feature type="transmembrane region" description="Helical; Name=VII" evidence="1">
    <location>
        <begin position="233"/>
        <end position="256"/>
    </location>
</feature>
<feature type="topological domain" description="Mitochondrial intermembrane" evidence="1">
    <location>
        <begin position="257"/>
        <end position="261"/>
    </location>
</feature>
<comment type="function">
    <text evidence="2">Component of the cytochrome c oxidase, the last enzyme in the mitochondrial electron transport chain which drives oxidative phosphorylation. The respiratory chain contains 3 multisubunit complexes succinate dehydrogenase (complex II, CII), ubiquinol-cytochrome c oxidoreductase (cytochrome b-c1 complex, complex III, CIII) and cytochrome c oxidase (complex IV, CIV), that cooperate to transfer electrons derived from NADH and succinate to molecular oxygen, creating an electrochemical gradient over the inner membrane that drives transmembrane transport and the ATP synthase. Cytochrome c oxidase is the component of the respiratory chain that catalyzes the reduction of oxygen to water. Electrons originating from reduced cytochrome c in the intermembrane space (IMS) are transferred via the dinuclear copper A center (CU(A)) of subunit 2 and heme A of subunit 1 to the active site in subunit 1, a binuclear center (BNC) formed by heme A3 and copper B (CU(B)). The BNC reduces molecular oxygen to 2 water molecules using 4 electrons from cytochrome c in the IMS and 4 protons from the mitochondrial matrix.</text>
</comment>
<comment type="catalytic activity">
    <reaction evidence="2">
        <text>4 Fe(II)-[cytochrome c] + O2 + 8 H(+)(in) = 4 Fe(III)-[cytochrome c] + 2 H2O + 4 H(+)(out)</text>
        <dbReference type="Rhea" id="RHEA:11436"/>
        <dbReference type="Rhea" id="RHEA-COMP:10350"/>
        <dbReference type="Rhea" id="RHEA-COMP:14399"/>
        <dbReference type="ChEBI" id="CHEBI:15377"/>
        <dbReference type="ChEBI" id="CHEBI:15378"/>
        <dbReference type="ChEBI" id="CHEBI:15379"/>
        <dbReference type="ChEBI" id="CHEBI:29033"/>
        <dbReference type="ChEBI" id="CHEBI:29034"/>
        <dbReference type="EC" id="7.1.1.9"/>
    </reaction>
    <physiologicalReaction direction="left-to-right" evidence="2">
        <dbReference type="Rhea" id="RHEA:11437"/>
    </physiologicalReaction>
</comment>
<comment type="subunit">
    <text evidence="1">Component of the cytochrome c oxidase (complex IV, CIV), a multisubunit enzyme composed of 14 subunits. The complex is composed of a catalytic core of 3 subunits MT-CO1, MT-CO2 and MT-CO3, encoded in the mitochondrial DNA, and 11 supernumerary subunits COX4I, COX5A, COX5B, COX6A, COX6B, COX6C, COX7A, COX7B, COX7C, COX8 and NDUFA4, which are encoded in the nuclear genome. The complex exists as a monomer or a dimer and forms supercomplexes (SCs) in the inner mitochondrial membrane with NADH-ubiquinone oxidoreductase (complex I, CI) and ubiquinol-cytochrome c oxidoreductase (cytochrome b-c1 complex, complex III, CIII), resulting in different assemblies (supercomplex SCI(1)III(2)IV(1) and megacomplex MCI(2)III(2)IV(2)).</text>
</comment>
<comment type="subcellular location">
    <subcellularLocation>
        <location evidence="1">Mitochondrion inner membrane</location>
        <topology evidence="1">Multi-pass membrane protein</topology>
    </subcellularLocation>
</comment>
<comment type="similarity">
    <text evidence="3">Belongs to the cytochrome c oxidase subunit 3 family.</text>
</comment>
<proteinExistence type="inferred from homology"/>
<organism>
    <name type="scientific">Madoqua guentheri</name>
    <name type="common">Guenther's dik-dik</name>
    <dbReference type="NCBI Taxonomy" id="66433"/>
    <lineage>
        <taxon>Eukaryota</taxon>
        <taxon>Metazoa</taxon>
        <taxon>Chordata</taxon>
        <taxon>Craniata</taxon>
        <taxon>Vertebrata</taxon>
        <taxon>Euteleostomi</taxon>
        <taxon>Mammalia</taxon>
        <taxon>Eutheria</taxon>
        <taxon>Laurasiatheria</taxon>
        <taxon>Artiodactyla</taxon>
        <taxon>Ruminantia</taxon>
        <taxon>Pecora</taxon>
        <taxon>Bovidae</taxon>
        <taxon>Antilopinae</taxon>
        <taxon>Madoqua</taxon>
    </lineage>
</organism>
<sequence>MTHQTHAYHMVNPSPWPLTGALSALLMTSGLIMWFHFNSTTLLTLGLTTNMLTMYQWWRDVIRESTFQGHHTPTVQKGLRYGMILFIISEVLFFTGFFWAFYHSSLAPTPELGGCWPPTGIHPLNPLEVPLLNTSVLLASGVSITWAHHSLMEGNRNPMLQALFITIALGIYFTLLQASEYYEAPFTISDGVYGSTFFVATGFHGLHVIIGSTFLIVCFFRQLKFHFTSNHHFGFEAAAWYWHFVDVVWLFLYVSIYWWGS</sequence>
<keyword id="KW-0472">Membrane</keyword>
<keyword id="KW-0496">Mitochondrion</keyword>
<keyword id="KW-0999">Mitochondrion inner membrane</keyword>
<keyword id="KW-1278">Translocase</keyword>
<keyword id="KW-0812">Transmembrane</keyword>
<keyword id="KW-1133">Transmembrane helix</keyword>
<evidence type="ECO:0000250" key="1">
    <source>
        <dbReference type="UniProtKB" id="P00415"/>
    </source>
</evidence>
<evidence type="ECO:0000250" key="2">
    <source>
        <dbReference type="UniProtKB" id="P00420"/>
    </source>
</evidence>
<evidence type="ECO:0000305" key="3"/>
<gene>
    <name type="primary">MT-CO3</name>
    <name type="synonym">COIII</name>
    <name type="synonym">COXIII</name>
    <name type="synonym">MTCO3</name>
</gene>
<dbReference type="EC" id="7.1.1.9"/>
<dbReference type="EMBL" id="AF030464">
    <property type="protein sequence ID" value="AAB93603.1"/>
    <property type="molecule type" value="Genomic_DNA"/>
</dbReference>
<dbReference type="SMR" id="O47699"/>
<dbReference type="GO" id="GO:0005743">
    <property type="term" value="C:mitochondrial inner membrane"/>
    <property type="evidence" value="ECO:0007669"/>
    <property type="project" value="UniProtKB-SubCell"/>
</dbReference>
<dbReference type="GO" id="GO:0045277">
    <property type="term" value="C:respiratory chain complex IV"/>
    <property type="evidence" value="ECO:0000250"/>
    <property type="project" value="UniProtKB"/>
</dbReference>
<dbReference type="GO" id="GO:0004129">
    <property type="term" value="F:cytochrome-c oxidase activity"/>
    <property type="evidence" value="ECO:0007669"/>
    <property type="project" value="UniProtKB-EC"/>
</dbReference>
<dbReference type="GO" id="GO:0006123">
    <property type="term" value="P:mitochondrial electron transport, cytochrome c to oxygen"/>
    <property type="evidence" value="ECO:0007669"/>
    <property type="project" value="TreeGrafter"/>
</dbReference>
<dbReference type="GO" id="GO:0008535">
    <property type="term" value="P:respiratory chain complex IV assembly"/>
    <property type="evidence" value="ECO:0000250"/>
    <property type="project" value="UniProtKB"/>
</dbReference>
<dbReference type="CDD" id="cd01665">
    <property type="entry name" value="Cyt_c_Oxidase_III"/>
    <property type="match status" value="1"/>
</dbReference>
<dbReference type="FunFam" id="1.10.287.70:FF:000048">
    <property type="entry name" value="Cytochrome c oxidase subunit 3"/>
    <property type="match status" value="1"/>
</dbReference>
<dbReference type="FunFam" id="1.20.120.80:FF:000002">
    <property type="entry name" value="Cytochrome c oxidase subunit 3"/>
    <property type="match status" value="1"/>
</dbReference>
<dbReference type="Gene3D" id="1.10.287.70">
    <property type="match status" value="1"/>
</dbReference>
<dbReference type="Gene3D" id="1.20.120.80">
    <property type="entry name" value="Cytochrome c oxidase, subunit III, four-helix bundle"/>
    <property type="match status" value="1"/>
</dbReference>
<dbReference type="InterPro" id="IPR024791">
    <property type="entry name" value="Cyt_c/ubiquinol_Oxase_su3"/>
</dbReference>
<dbReference type="InterPro" id="IPR033945">
    <property type="entry name" value="Cyt_c_oxase_su3_dom"/>
</dbReference>
<dbReference type="InterPro" id="IPR000298">
    <property type="entry name" value="Cyt_c_oxidase-like_su3"/>
</dbReference>
<dbReference type="InterPro" id="IPR035973">
    <property type="entry name" value="Cyt_c_oxidase_su3-like_sf"/>
</dbReference>
<dbReference type="InterPro" id="IPR013833">
    <property type="entry name" value="Cyt_c_oxidase_su3_a-hlx"/>
</dbReference>
<dbReference type="PANTHER" id="PTHR11403:SF7">
    <property type="entry name" value="CYTOCHROME C OXIDASE SUBUNIT 3"/>
    <property type="match status" value="1"/>
</dbReference>
<dbReference type="PANTHER" id="PTHR11403">
    <property type="entry name" value="CYTOCHROME C OXIDASE SUBUNIT III"/>
    <property type="match status" value="1"/>
</dbReference>
<dbReference type="Pfam" id="PF00510">
    <property type="entry name" value="COX3"/>
    <property type="match status" value="1"/>
</dbReference>
<dbReference type="SUPFAM" id="SSF81452">
    <property type="entry name" value="Cytochrome c oxidase subunit III-like"/>
    <property type="match status" value="1"/>
</dbReference>
<dbReference type="PROSITE" id="PS50253">
    <property type="entry name" value="COX3"/>
    <property type="match status" value="1"/>
</dbReference>
<accession>O47699</accession>
<name>COX3_MADGU</name>
<reference key="1">
    <citation type="journal article" date="1999" name="Mol. Phylogenet. Evol.">
        <title>Phylogenetic relationships in the bovid subfamily Antilopinae based on mitochondrial DNA sequences.</title>
        <authorList>
            <person name="Rebholz W.E.R."/>
            <person name="Harley E.H."/>
        </authorList>
    </citation>
    <scope>NUCLEOTIDE SEQUENCE [GENOMIC DNA]</scope>
</reference>